<keyword id="KW-0150">Chloroplast</keyword>
<keyword id="KW-0396">Initiation factor</keyword>
<keyword id="KW-0934">Plastid</keyword>
<keyword id="KW-0648">Protein biosynthesis</keyword>
<keyword id="KW-0694">RNA-binding</keyword>
<keyword id="KW-0699">rRNA-binding</keyword>
<reference key="1">
    <citation type="journal article" date="2001" name="Plant Cell">
        <title>Many parallel losses of infA from chloroplast DNA during angiosperm evolution with multiple independent transfers to the nucleus.</title>
        <authorList>
            <person name="Millen R.S."/>
            <person name="Olmstead R.G."/>
            <person name="Adams K.L."/>
            <person name="Palmer J.D."/>
            <person name="Lao N.T."/>
            <person name="Heggie L."/>
            <person name="Kavanagh T.A."/>
            <person name="Hibberd J.M."/>
            <person name="Gray J.C."/>
            <person name="Morden C.W."/>
            <person name="Calie P.J."/>
            <person name="Jermiin L.S."/>
            <person name="Wolfe K.H."/>
        </authorList>
    </citation>
    <scope>NUCLEOTIDE SEQUENCE [GENOMIC DNA]</scope>
</reference>
<comment type="function">
    <text evidence="1">One of the essential components for the initiation of protein synthesis. Stabilizes the binding of IF-2 and IF-3 on the 30S subunit to which N-formylmethionyl-tRNA(fMet) subsequently binds. Helps modulate mRNA selection, yielding the 30S pre-initiation complex (PIC). Upon addition of the 50S ribosomal subunit IF-1, IF-2 and IF-3 are released leaving the mature 70S translation initiation complex.</text>
</comment>
<comment type="subunit">
    <text evidence="1">Component of the 30S ribosomal translation pre-initiation complex which assembles on the 30S ribosome in the order IF-2 and IF-3, IF-1 and N-formylmethionyl-tRNA(fMet); mRNA recruitment can occur at any time during PIC assembly.</text>
</comment>
<comment type="subcellular location">
    <subcellularLocation>
        <location evidence="1">Plastid</location>
        <location evidence="1">Chloroplast</location>
    </subcellularLocation>
</comment>
<comment type="similarity">
    <text evidence="1">Belongs to the IF-1 family.</text>
</comment>
<geneLocation type="chloroplast"/>
<proteinExistence type="inferred from homology"/>
<feature type="chain" id="PRO_0000095919" description="Translation initiation factor IF-1, chloroplastic">
    <location>
        <begin position="1"/>
        <end position="77"/>
    </location>
</feature>
<feature type="domain" description="S1-like" evidence="1">
    <location>
        <begin position="1"/>
        <end position="71"/>
    </location>
</feature>
<sequence>MKEQKLIHEGLIIESLPNGMFRVRLDNEDLILGYVSGRIRRSFIRILPGDRVKIEVSRYDSTRGRIIYRLRNKDSND</sequence>
<gene>
    <name evidence="1" type="primary">infA</name>
</gene>
<organism>
    <name type="scientific">Asarum canadense</name>
    <name type="common">Wild ginger</name>
    <dbReference type="NCBI Taxonomy" id="28498"/>
    <lineage>
        <taxon>Eukaryota</taxon>
        <taxon>Viridiplantae</taxon>
        <taxon>Streptophyta</taxon>
        <taxon>Embryophyta</taxon>
        <taxon>Tracheophyta</taxon>
        <taxon>Spermatophyta</taxon>
        <taxon>Magnoliopsida</taxon>
        <taxon>Magnoliidae</taxon>
        <taxon>Piperales</taxon>
        <taxon>Asaraceae</taxon>
        <taxon>Asarum</taxon>
    </lineage>
</organism>
<name>IF1C_ASACA</name>
<evidence type="ECO:0000255" key="1">
    <source>
        <dbReference type="HAMAP-Rule" id="MF_00075"/>
    </source>
</evidence>
<protein>
    <recommendedName>
        <fullName evidence="1">Translation initiation factor IF-1, chloroplastic</fullName>
    </recommendedName>
</protein>
<dbReference type="EMBL" id="AF347620">
    <property type="protein sequence ID" value="AAK38848.1"/>
    <property type="molecule type" value="Genomic_DNA"/>
</dbReference>
<dbReference type="SMR" id="Q95GN5"/>
<dbReference type="GO" id="GO:0009507">
    <property type="term" value="C:chloroplast"/>
    <property type="evidence" value="ECO:0007669"/>
    <property type="project" value="UniProtKB-SubCell"/>
</dbReference>
<dbReference type="GO" id="GO:0005829">
    <property type="term" value="C:cytosol"/>
    <property type="evidence" value="ECO:0007669"/>
    <property type="project" value="TreeGrafter"/>
</dbReference>
<dbReference type="GO" id="GO:0043022">
    <property type="term" value="F:ribosome binding"/>
    <property type="evidence" value="ECO:0007669"/>
    <property type="project" value="UniProtKB-UniRule"/>
</dbReference>
<dbReference type="GO" id="GO:0019843">
    <property type="term" value="F:rRNA binding"/>
    <property type="evidence" value="ECO:0007669"/>
    <property type="project" value="UniProtKB-UniRule"/>
</dbReference>
<dbReference type="GO" id="GO:0003743">
    <property type="term" value="F:translation initiation factor activity"/>
    <property type="evidence" value="ECO:0007669"/>
    <property type="project" value="UniProtKB-UniRule"/>
</dbReference>
<dbReference type="CDD" id="cd04451">
    <property type="entry name" value="S1_IF1"/>
    <property type="match status" value="1"/>
</dbReference>
<dbReference type="FunFam" id="2.40.50.140:FF:000019">
    <property type="entry name" value="Translation initiation factor IF-1, chloroplastic"/>
    <property type="match status" value="1"/>
</dbReference>
<dbReference type="Gene3D" id="2.40.50.140">
    <property type="entry name" value="Nucleic acid-binding proteins"/>
    <property type="match status" value="1"/>
</dbReference>
<dbReference type="HAMAP" id="MF_00075">
    <property type="entry name" value="IF_1"/>
    <property type="match status" value="1"/>
</dbReference>
<dbReference type="InterPro" id="IPR012340">
    <property type="entry name" value="NA-bd_OB-fold"/>
</dbReference>
<dbReference type="InterPro" id="IPR006196">
    <property type="entry name" value="RNA-binding_domain_S1_IF1"/>
</dbReference>
<dbReference type="InterPro" id="IPR003029">
    <property type="entry name" value="S1_domain"/>
</dbReference>
<dbReference type="InterPro" id="IPR004368">
    <property type="entry name" value="TIF_IF1"/>
</dbReference>
<dbReference type="NCBIfam" id="TIGR00008">
    <property type="entry name" value="infA"/>
    <property type="match status" value="1"/>
</dbReference>
<dbReference type="PANTHER" id="PTHR33370">
    <property type="entry name" value="TRANSLATION INITIATION FACTOR IF-1, CHLOROPLASTIC"/>
    <property type="match status" value="1"/>
</dbReference>
<dbReference type="PANTHER" id="PTHR33370:SF1">
    <property type="entry name" value="TRANSLATION INITIATION FACTOR IF-1, CHLOROPLASTIC"/>
    <property type="match status" value="1"/>
</dbReference>
<dbReference type="Pfam" id="PF01176">
    <property type="entry name" value="eIF-1a"/>
    <property type="match status" value="1"/>
</dbReference>
<dbReference type="SMART" id="SM00316">
    <property type="entry name" value="S1"/>
    <property type="match status" value="1"/>
</dbReference>
<dbReference type="SUPFAM" id="SSF50249">
    <property type="entry name" value="Nucleic acid-binding proteins"/>
    <property type="match status" value="1"/>
</dbReference>
<dbReference type="PROSITE" id="PS50832">
    <property type="entry name" value="S1_IF1_TYPE"/>
    <property type="match status" value="1"/>
</dbReference>
<accession>Q95GN5</accession>